<protein>
    <recommendedName>
        <fullName evidence="1">NAD(P)H-quinone oxidoreductase subunit 2, chloroplastic</fullName>
        <ecNumber evidence="1">7.1.1.-</ecNumber>
    </recommendedName>
    <alternativeName>
        <fullName evidence="1">NAD(P)H dehydrogenase, subunit 2</fullName>
    </alternativeName>
    <alternativeName>
        <fullName evidence="1">NADH-plastoquinone oxidoreductase subunit 2</fullName>
    </alternativeName>
</protein>
<name>NU2C_MUIMA</name>
<sequence>MIWHVQNENFILDSTRIFMKAFHLLLFHGSFIFPECILIFGLILLLMIDSTSDQKDRPWFYFISSTSLVMSITALLFRWKEEPIISFSGNFQTNNFNEIFQFLILLCSTLCIPLSVEYIECTEMAITEFLLFVLTATLGGMFLCGANDLITIFVAPECFSLCSYLLSGYTKRDVRSNEATTKYLLMGGASSSILVHGFSWLYGLSGGEIELQEIVNGLINTQMYNSPGISIALISITVGIGFKLSPAPFHQWTPDVYEGSPTPVVAFLSVTSKVAASASATRIFDIPFYFSSNEWHLLLEILAILSMILGNLIAITQTSMKRMLAYSSIGQIGYVIIGIIVGDSNDGYASMITYMLFYISMNLGTFARIVSFGLRTGTDNIRDYAGLYTKDPFLALSLALCLLSLGGLPPLAGFFGKLHLFWCGWQAGLYFLVSIGLLTSVVSIYYYLKIIKLLMTGRNQEITPHVRNYRRSPLRSNNSIEWSMTVCVIASTIPGISMNPILAIAQDTLF</sequence>
<comment type="function">
    <text evidence="1">NDH shuttles electrons from NAD(P)H:plastoquinone, via FMN and iron-sulfur (Fe-S) centers, to quinones in the photosynthetic chain and possibly in a chloroplast respiratory chain. The immediate electron acceptor for the enzyme in this species is believed to be plastoquinone. Couples the redox reaction to proton translocation, and thus conserves the redox energy in a proton gradient.</text>
</comment>
<comment type="catalytic activity">
    <reaction evidence="1">
        <text>a plastoquinone + NADH + (n+1) H(+)(in) = a plastoquinol + NAD(+) + n H(+)(out)</text>
        <dbReference type="Rhea" id="RHEA:42608"/>
        <dbReference type="Rhea" id="RHEA-COMP:9561"/>
        <dbReference type="Rhea" id="RHEA-COMP:9562"/>
        <dbReference type="ChEBI" id="CHEBI:15378"/>
        <dbReference type="ChEBI" id="CHEBI:17757"/>
        <dbReference type="ChEBI" id="CHEBI:57540"/>
        <dbReference type="ChEBI" id="CHEBI:57945"/>
        <dbReference type="ChEBI" id="CHEBI:62192"/>
    </reaction>
</comment>
<comment type="catalytic activity">
    <reaction evidence="1">
        <text>a plastoquinone + NADPH + (n+1) H(+)(in) = a plastoquinol + NADP(+) + n H(+)(out)</text>
        <dbReference type="Rhea" id="RHEA:42612"/>
        <dbReference type="Rhea" id="RHEA-COMP:9561"/>
        <dbReference type="Rhea" id="RHEA-COMP:9562"/>
        <dbReference type="ChEBI" id="CHEBI:15378"/>
        <dbReference type="ChEBI" id="CHEBI:17757"/>
        <dbReference type="ChEBI" id="CHEBI:57783"/>
        <dbReference type="ChEBI" id="CHEBI:58349"/>
        <dbReference type="ChEBI" id="CHEBI:62192"/>
    </reaction>
</comment>
<comment type="subunit">
    <text evidence="1">NDH is composed of at least 16 different subunits, 5 of which are encoded in the nucleus.</text>
</comment>
<comment type="subcellular location">
    <subcellularLocation>
        <location evidence="1">Plastid</location>
        <location evidence="1">Chloroplast thylakoid membrane</location>
        <topology evidence="1">Multi-pass membrane protein</topology>
    </subcellularLocation>
</comment>
<comment type="similarity">
    <text evidence="1">Belongs to the complex I subunit 2 family.</text>
</comment>
<comment type="sequence caution" evidence="2">
    <conflict type="erroneous initiation">
        <sequence resource="EMBL-CDS" id="AAN32091"/>
    </conflict>
</comment>
<dbReference type="EC" id="7.1.1.-" evidence="1"/>
<dbReference type="EMBL" id="AY147495">
    <property type="protein sequence ID" value="AAN32091.1"/>
    <property type="status" value="ALT_INIT"/>
    <property type="molecule type" value="Genomic_DNA"/>
</dbReference>
<dbReference type="SMR" id="Q67IB2"/>
<dbReference type="GO" id="GO:0009535">
    <property type="term" value="C:chloroplast thylakoid membrane"/>
    <property type="evidence" value="ECO:0007669"/>
    <property type="project" value="UniProtKB-SubCell"/>
</dbReference>
<dbReference type="GO" id="GO:0008137">
    <property type="term" value="F:NADH dehydrogenase (ubiquinone) activity"/>
    <property type="evidence" value="ECO:0007669"/>
    <property type="project" value="InterPro"/>
</dbReference>
<dbReference type="GO" id="GO:0048038">
    <property type="term" value="F:quinone binding"/>
    <property type="evidence" value="ECO:0007669"/>
    <property type="project" value="UniProtKB-KW"/>
</dbReference>
<dbReference type="GO" id="GO:0042773">
    <property type="term" value="P:ATP synthesis coupled electron transport"/>
    <property type="evidence" value="ECO:0007669"/>
    <property type="project" value="InterPro"/>
</dbReference>
<dbReference type="GO" id="GO:0019684">
    <property type="term" value="P:photosynthesis, light reaction"/>
    <property type="evidence" value="ECO:0007669"/>
    <property type="project" value="UniProtKB-UniRule"/>
</dbReference>
<dbReference type="HAMAP" id="MF_00445">
    <property type="entry name" value="NDH1_NuoN_1"/>
    <property type="match status" value="1"/>
</dbReference>
<dbReference type="InterPro" id="IPR010096">
    <property type="entry name" value="NADH-Q_OxRdtase_suN/2"/>
</dbReference>
<dbReference type="InterPro" id="IPR001750">
    <property type="entry name" value="ND/Mrp_TM"/>
</dbReference>
<dbReference type="InterPro" id="IPR045693">
    <property type="entry name" value="Ndh2_N"/>
</dbReference>
<dbReference type="NCBIfam" id="TIGR01770">
    <property type="entry name" value="NDH_I_N"/>
    <property type="match status" value="1"/>
</dbReference>
<dbReference type="NCBIfam" id="NF002701">
    <property type="entry name" value="PRK02504.1"/>
    <property type="match status" value="1"/>
</dbReference>
<dbReference type="PANTHER" id="PTHR22773">
    <property type="entry name" value="NADH DEHYDROGENASE"/>
    <property type="match status" value="1"/>
</dbReference>
<dbReference type="Pfam" id="PF19530">
    <property type="entry name" value="Ndh2_N"/>
    <property type="match status" value="1"/>
</dbReference>
<dbReference type="Pfam" id="PF00361">
    <property type="entry name" value="Proton_antipo_M"/>
    <property type="match status" value="1"/>
</dbReference>
<dbReference type="PRINTS" id="PR01434">
    <property type="entry name" value="NADHDHGNASE5"/>
</dbReference>
<gene>
    <name evidence="1" type="primary">ndhB</name>
</gene>
<reference key="1">
    <citation type="submission" date="2002-09" db="EMBL/GenBank/DDBJ databases">
        <title>Phylogenetic relationships among the major lineages of Asparagales based on a large chloroplast data set.</title>
        <authorList>
            <person name="McPherson M.A."/>
            <person name="Rai H.S."/>
            <person name="Wong W.A."/>
            <person name="Graham S.W."/>
        </authorList>
    </citation>
    <scope>NUCLEOTIDE SEQUENCE [GENOMIC DNA]</scope>
</reference>
<organism>
    <name type="scientific">Muilla maritima</name>
    <name type="common">Sea muilla</name>
    <name type="synonym">Hesperoscordum maritimum</name>
    <dbReference type="NCBI Taxonomy" id="51461"/>
    <lineage>
        <taxon>Eukaryota</taxon>
        <taxon>Viridiplantae</taxon>
        <taxon>Streptophyta</taxon>
        <taxon>Embryophyta</taxon>
        <taxon>Tracheophyta</taxon>
        <taxon>Spermatophyta</taxon>
        <taxon>Magnoliopsida</taxon>
        <taxon>Liliopsida</taxon>
        <taxon>Asparagales</taxon>
        <taxon>Asparagaceae</taxon>
        <taxon>Brodiaeoideae</taxon>
        <taxon>Muilla</taxon>
    </lineage>
</organism>
<accession>Q67IB2</accession>
<geneLocation type="chloroplast"/>
<proteinExistence type="inferred from homology"/>
<evidence type="ECO:0000255" key="1">
    <source>
        <dbReference type="HAMAP-Rule" id="MF_00445"/>
    </source>
</evidence>
<evidence type="ECO:0000305" key="2"/>
<feature type="chain" id="PRO_0000225346" description="NAD(P)H-quinone oxidoreductase subunit 2, chloroplastic">
    <location>
        <begin position="1"/>
        <end position="510"/>
    </location>
</feature>
<feature type="transmembrane region" description="Helical" evidence="1">
    <location>
        <begin position="24"/>
        <end position="44"/>
    </location>
</feature>
<feature type="transmembrane region" description="Helical" evidence="1">
    <location>
        <begin position="59"/>
        <end position="79"/>
    </location>
</feature>
<feature type="transmembrane region" description="Helical" evidence="1">
    <location>
        <begin position="99"/>
        <end position="119"/>
    </location>
</feature>
<feature type="transmembrane region" description="Helical" evidence="1">
    <location>
        <begin position="124"/>
        <end position="144"/>
    </location>
</feature>
<feature type="transmembrane region" description="Helical" evidence="1">
    <location>
        <begin position="149"/>
        <end position="169"/>
    </location>
</feature>
<feature type="transmembrane region" description="Helical" evidence="1">
    <location>
        <begin position="184"/>
        <end position="204"/>
    </location>
</feature>
<feature type="transmembrane region" description="Helical" evidence="1">
    <location>
        <begin position="229"/>
        <end position="249"/>
    </location>
</feature>
<feature type="transmembrane region" description="Helical" evidence="1">
    <location>
        <begin position="295"/>
        <end position="315"/>
    </location>
</feature>
<feature type="transmembrane region" description="Helical" evidence="1">
    <location>
        <begin position="323"/>
        <end position="343"/>
    </location>
</feature>
<feature type="transmembrane region" description="Helical" evidence="1">
    <location>
        <begin position="347"/>
        <end position="367"/>
    </location>
</feature>
<feature type="transmembrane region" description="Helical" evidence="1">
    <location>
        <begin position="395"/>
        <end position="415"/>
    </location>
</feature>
<feature type="transmembrane region" description="Helical" evidence="1">
    <location>
        <begin position="418"/>
        <end position="438"/>
    </location>
</feature>
<keyword id="KW-0150">Chloroplast</keyword>
<keyword id="KW-0472">Membrane</keyword>
<keyword id="KW-0520">NAD</keyword>
<keyword id="KW-0521">NADP</keyword>
<keyword id="KW-0934">Plastid</keyword>
<keyword id="KW-0618">Plastoquinone</keyword>
<keyword id="KW-0874">Quinone</keyword>
<keyword id="KW-0793">Thylakoid</keyword>
<keyword id="KW-1278">Translocase</keyword>
<keyword id="KW-0812">Transmembrane</keyword>
<keyword id="KW-1133">Transmembrane helix</keyword>
<keyword id="KW-0813">Transport</keyword>